<name>RBL_ACESA</name>
<dbReference type="EC" id="4.1.1.39" evidence="1"/>
<dbReference type="EMBL" id="L01881">
    <property type="protein sequence ID" value="AAA84006.2"/>
    <property type="molecule type" value="Genomic_DNA"/>
</dbReference>
<dbReference type="EMBL" id="L13181">
    <property type="protein sequence ID" value="AAA93537.1"/>
    <property type="status" value="ALT_INIT"/>
    <property type="molecule type" value="Genomic_DNA"/>
</dbReference>
<dbReference type="SMR" id="P28376"/>
<dbReference type="GO" id="GO:0009507">
    <property type="term" value="C:chloroplast"/>
    <property type="evidence" value="ECO:0007669"/>
    <property type="project" value="UniProtKB-SubCell"/>
</dbReference>
<dbReference type="GO" id="GO:0000287">
    <property type="term" value="F:magnesium ion binding"/>
    <property type="evidence" value="ECO:0007669"/>
    <property type="project" value="InterPro"/>
</dbReference>
<dbReference type="GO" id="GO:0004497">
    <property type="term" value="F:monooxygenase activity"/>
    <property type="evidence" value="ECO:0007669"/>
    <property type="project" value="UniProtKB-KW"/>
</dbReference>
<dbReference type="GO" id="GO:0016984">
    <property type="term" value="F:ribulose-bisphosphate carboxylase activity"/>
    <property type="evidence" value="ECO:0007669"/>
    <property type="project" value="UniProtKB-EC"/>
</dbReference>
<dbReference type="GO" id="GO:0009853">
    <property type="term" value="P:photorespiration"/>
    <property type="evidence" value="ECO:0007669"/>
    <property type="project" value="UniProtKB-KW"/>
</dbReference>
<dbReference type="GO" id="GO:0019253">
    <property type="term" value="P:reductive pentose-phosphate cycle"/>
    <property type="evidence" value="ECO:0007669"/>
    <property type="project" value="UniProtKB-KW"/>
</dbReference>
<dbReference type="CDD" id="cd08212">
    <property type="entry name" value="RuBisCO_large_I"/>
    <property type="match status" value="1"/>
</dbReference>
<dbReference type="FunFam" id="3.20.20.110:FF:000001">
    <property type="entry name" value="Ribulose bisphosphate carboxylase large chain"/>
    <property type="match status" value="1"/>
</dbReference>
<dbReference type="FunFam" id="3.30.70.150:FF:000001">
    <property type="entry name" value="Ribulose bisphosphate carboxylase large chain"/>
    <property type="match status" value="1"/>
</dbReference>
<dbReference type="Gene3D" id="3.20.20.110">
    <property type="entry name" value="Ribulose bisphosphate carboxylase, large subunit, C-terminal domain"/>
    <property type="match status" value="1"/>
</dbReference>
<dbReference type="Gene3D" id="3.30.70.150">
    <property type="entry name" value="RuBisCO large subunit, N-terminal domain"/>
    <property type="match status" value="1"/>
</dbReference>
<dbReference type="HAMAP" id="MF_01338">
    <property type="entry name" value="RuBisCO_L_type1"/>
    <property type="match status" value="1"/>
</dbReference>
<dbReference type="InterPro" id="IPR033966">
    <property type="entry name" value="RuBisCO"/>
</dbReference>
<dbReference type="InterPro" id="IPR020878">
    <property type="entry name" value="RuBisCo_large_chain_AS"/>
</dbReference>
<dbReference type="InterPro" id="IPR000685">
    <property type="entry name" value="RuBisCO_lsu_C"/>
</dbReference>
<dbReference type="InterPro" id="IPR036376">
    <property type="entry name" value="RuBisCO_lsu_C_sf"/>
</dbReference>
<dbReference type="InterPro" id="IPR017443">
    <property type="entry name" value="RuBisCO_lsu_fd_N"/>
</dbReference>
<dbReference type="InterPro" id="IPR036422">
    <property type="entry name" value="RuBisCO_lsu_N_sf"/>
</dbReference>
<dbReference type="InterPro" id="IPR020888">
    <property type="entry name" value="RuBisCO_lsuI"/>
</dbReference>
<dbReference type="NCBIfam" id="NF003252">
    <property type="entry name" value="PRK04208.1"/>
    <property type="match status" value="1"/>
</dbReference>
<dbReference type="PANTHER" id="PTHR42704">
    <property type="entry name" value="RIBULOSE BISPHOSPHATE CARBOXYLASE"/>
    <property type="match status" value="1"/>
</dbReference>
<dbReference type="PANTHER" id="PTHR42704:SF15">
    <property type="entry name" value="RIBULOSE BISPHOSPHATE CARBOXYLASE LARGE CHAIN"/>
    <property type="match status" value="1"/>
</dbReference>
<dbReference type="Pfam" id="PF00016">
    <property type="entry name" value="RuBisCO_large"/>
    <property type="match status" value="1"/>
</dbReference>
<dbReference type="Pfam" id="PF02788">
    <property type="entry name" value="RuBisCO_large_N"/>
    <property type="match status" value="1"/>
</dbReference>
<dbReference type="SFLD" id="SFLDG01052">
    <property type="entry name" value="RuBisCO"/>
    <property type="match status" value="1"/>
</dbReference>
<dbReference type="SFLD" id="SFLDS00014">
    <property type="entry name" value="RuBisCO"/>
    <property type="match status" value="1"/>
</dbReference>
<dbReference type="SFLD" id="SFLDG00301">
    <property type="entry name" value="RuBisCO-like_proteins"/>
    <property type="match status" value="1"/>
</dbReference>
<dbReference type="SUPFAM" id="SSF51649">
    <property type="entry name" value="RuBisCo, C-terminal domain"/>
    <property type="match status" value="1"/>
</dbReference>
<dbReference type="SUPFAM" id="SSF54966">
    <property type="entry name" value="RuBisCO, large subunit, small (N-terminal) domain"/>
    <property type="match status" value="1"/>
</dbReference>
<dbReference type="PROSITE" id="PS00157">
    <property type="entry name" value="RUBISCO_LARGE"/>
    <property type="match status" value="1"/>
</dbReference>
<gene>
    <name evidence="1" type="primary">rbcL</name>
</gene>
<proteinExistence type="inferred from homology"/>
<evidence type="ECO:0000255" key="1">
    <source>
        <dbReference type="HAMAP-Rule" id="MF_01338"/>
    </source>
</evidence>
<evidence type="ECO:0000305" key="2"/>
<geneLocation type="chloroplast"/>
<feature type="chain" id="PRO_0000062337" description="Ribulose bisphosphate carboxylase large chain">
    <location>
        <begin position="1" status="less than"/>
        <end position="465"/>
    </location>
</feature>
<feature type="active site" description="Proton acceptor" evidence="1">
    <location>
        <position position="165"/>
    </location>
</feature>
<feature type="active site" description="Proton acceptor" evidence="1">
    <location>
        <position position="284"/>
    </location>
</feature>
<feature type="binding site" description="in homodimeric partner" evidence="1">
    <location>
        <position position="113"/>
    </location>
    <ligand>
        <name>substrate</name>
    </ligand>
</feature>
<feature type="binding site" evidence="1">
    <location>
        <position position="163"/>
    </location>
    <ligand>
        <name>substrate</name>
    </ligand>
</feature>
<feature type="binding site" evidence="1">
    <location>
        <position position="167"/>
    </location>
    <ligand>
        <name>substrate</name>
    </ligand>
</feature>
<feature type="binding site" description="via carbamate group" evidence="1">
    <location>
        <position position="191"/>
    </location>
    <ligand>
        <name>Mg(2+)</name>
        <dbReference type="ChEBI" id="CHEBI:18420"/>
    </ligand>
</feature>
<feature type="binding site" evidence="1">
    <location>
        <position position="193"/>
    </location>
    <ligand>
        <name>Mg(2+)</name>
        <dbReference type="ChEBI" id="CHEBI:18420"/>
    </ligand>
</feature>
<feature type="binding site" evidence="1">
    <location>
        <position position="194"/>
    </location>
    <ligand>
        <name>Mg(2+)</name>
        <dbReference type="ChEBI" id="CHEBI:18420"/>
    </ligand>
</feature>
<feature type="binding site" evidence="1">
    <location>
        <position position="285"/>
    </location>
    <ligand>
        <name>substrate</name>
    </ligand>
</feature>
<feature type="binding site" evidence="1">
    <location>
        <position position="317"/>
    </location>
    <ligand>
        <name>substrate</name>
    </ligand>
</feature>
<feature type="binding site" evidence="1">
    <location>
        <position position="369"/>
    </location>
    <ligand>
        <name>substrate</name>
    </ligand>
</feature>
<feature type="site" description="Transition state stabilizer" evidence="1">
    <location>
        <position position="324"/>
    </location>
</feature>
<feature type="modified residue" description="N6,N6,N6-trimethyllysine" evidence="1">
    <location>
        <position position="4"/>
    </location>
</feature>
<feature type="modified residue" description="N6-carboxylysine" evidence="1">
    <location>
        <position position="191"/>
    </location>
</feature>
<feature type="disulfide bond" description="Interchain; in linked form" evidence="1">
    <location>
        <position position="237"/>
    </location>
</feature>
<feature type="non-terminal residue">
    <location>
        <position position="1"/>
    </location>
</feature>
<organism>
    <name type="scientific">Acer saccharum</name>
    <name type="common">Sugar maple</name>
    <dbReference type="NCBI Taxonomy" id="4024"/>
    <lineage>
        <taxon>Eukaryota</taxon>
        <taxon>Viridiplantae</taxon>
        <taxon>Streptophyta</taxon>
        <taxon>Embryophyta</taxon>
        <taxon>Tracheophyta</taxon>
        <taxon>Spermatophyta</taxon>
        <taxon>Magnoliopsida</taxon>
        <taxon>eudicotyledons</taxon>
        <taxon>Gunneridae</taxon>
        <taxon>Pentapetalae</taxon>
        <taxon>rosids</taxon>
        <taxon>malvids</taxon>
        <taxon>Sapindales</taxon>
        <taxon>Sapindaceae</taxon>
        <taxon>Hippocastanoideae</taxon>
        <taxon>Acereae</taxon>
        <taxon>Acer</taxon>
    </lineage>
</organism>
<comment type="function">
    <text evidence="1">RuBisCO catalyzes two reactions: the carboxylation of D-ribulose 1,5-bisphosphate, the primary event in carbon dioxide fixation, as well as the oxidative fragmentation of the pentose substrate in the photorespiration process. Both reactions occur simultaneously and in competition at the same active site.</text>
</comment>
<comment type="catalytic activity">
    <reaction evidence="1">
        <text>2 (2R)-3-phosphoglycerate + 2 H(+) = D-ribulose 1,5-bisphosphate + CO2 + H2O</text>
        <dbReference type="Rhea" id="RHEA:23124"/>
        <dbReference type="ChEBI" id="CHEBI:15377"/>
        <dbReference type="ChEBI" id="CHEBI:15378"/>
        <dbReference type="ChEBI" id="CHEBI:16526"/>
        <dbReference type="ChEBI" id="CHEBI:57870"/>
        <dbReference type="ChEBI" id="CHEBI:58272"/>
        <dbReference type="EC" id="4.1.1.39"/>
    </reaction>
</comment>
<comment type="catalytic activity">
    <reaction evidence="1">
        <text>D-ribulose 1,5-bisphosphate + O2 = 2-phosphoglycolate + (2R)-3-phosphoglycerate + 2 H(+)</text>
        <dbReference type="Rhea" id="RHEA:36631"/>
        <dbReference type="ChEBI" id="CHEBI:15378"/>
        <dbReference type="ChEBI" id="CHEBI:15379"/>
        <dbReference type="ChEBI" id="CHEBI:57870"/>
        <dbReference type="ChEBI" id="CHEBI:58033"/>
        <dbReference type="ChEBI" id="CHEBI:58272"/>
    </reaction>
</comment>
<comment type="cofactor">
    <cofactor evidence="1">
        <name>Mg(2+)</name>
        <dbReference type="ChEBI" id="CHEBI:18420"/>
    </cofactor>
    <text evidence="1">Binds 1 Mg(2+) ion per subunit.</text>
</comment>
<comment type="subunit">
    <text evidence="1">Heterohexadecamer of 8 large chains and 8 small chains; disulfide-linked. The disulfide link is formed within the large subunit homodimers.</text>
</comment>
<comment type="subcellular location">
    <subcellularLocation>
        <location>Plastid</location>
        <location>Chloroplast</location>
    </subcellularLocation>
</comment>
<comment type="PTM">
    <text evidence="1">The disulfide bond which can form in the large chain dimeric partners within the hexadecamer appears to be associated with oxidative stress and protein turnover.</text>
</comment>
<comment type="miscellaneous">
    <text evidence="1">The basic functional RuBisCO is composed of a large chain homodimer in a 'head-to-tail' conformation. In form I RuBisCO this homodimer is arranged in a barrel-like tetramer with the small subunits forming a tetrameric 'cap' on each end of the 'barrel'.</text>
</comment>
<comment type="similarity">
    <text evidence="1">Belongs to the RuBisCO large chain family. Type I subfamily.</text>
</comment>
<comment type="sequence caution" evidence="2">
    <conflict type="erroneous initiation">
        <sequence resource="EMBL-CDS" id="AAA93537"/>
    </conflict>
</comment>
<keyword id="KW-0113">Calvin cycle</keyword>
<keyword id="KW-0120">Carbon dioxide fixation</keyword>
<keyword id="KW-0150">Chloroplast</keyword>
<keyword id="KW-1015">Disulfide bond</keyword>
<keyword id="KW-0456">Lyase</keyword>
<keyword id="KW-0460">Magnesium</keyword>
<keyword id="KW-0479">Metal-binding</keyword>
<keyword id="KW-0488">Methylation</keyword>
<keyword id="KW-0503">Monooxygenase</keyword>
<keyword id="KW-0560">Oxidoreductase</keyword>
<keyword id="KW-0601">Photorespiration</keyword>
<keyword id="KW-0602">Photosynthesis</keyword>
<keyword id="KW-0934">Plastid</keyword>
<sequence length="465" mass="51579">VGFKAGVKDYKLTYYTPEYVTKDTDILAAFRVTPQPGVPPEEAGAAVAAESSTGTWTTVWTDGLTSLDRYKGRCYNIEPVAGEENQYICYVAYPLDLFEEGSVTNMFTSIVGNVFGFKALRALRLEDLRIPPAYSKTFQGPPHGIQVERDKLNKYGRPLLGCTIKPKLGLSAKNYGRAVYECLRGGLDFTKDDENVNSQPFMRWRDRFLFCAEAIFKSQAETGEIKGHYLNATAGTCEEMIKRAVFARELGVPIVMHDYLTGGFTANTSLAHYCRDNGLLLHIHRAMHAVIDRQKNHGMHFRVLAKALRMSGGDHIHAGTVVGKLEGERDITLGFVDLLRDDFIEKDRSRGIYFTQDWVSLPGVLPVASGGIHVWHMPALTEIFGDDSVLQFGGGTLGHPWGNAPGAVANRVALEACVQARNEGRDLAREGNEIIREASKWSAELAAACEVWKEIKFQFEAMDTL</sequence>
<protein>
    <recommendedName>
        <fullName evidence="1">Ribulose bisphosphate carboxylase large chain</fullName>
        <shortName evidence="1">RuBisCO large subunit</shortName>
        <ecNumber evidence="1">4.1.1.39</ecNumber>
    </recommendedName>
</protein>
<reference key="1">
    <citation type="journal article" date="1992" name="Science">
        <title>Carnivorous plants: phylogeny and structural evolution.</title>
        <authorList>
            <person name="Albert V.A."/>
            <person name="Williams S.E."/>
            <person name="Chase M.W."/>
        </authorList>
    </citation>
    <scope>NUCLEOTIDE SEQUENCE [GENOMIC DNA]</scope>
</reference>
<accession>P28376</accession>